<organism>
    <name type="scientific">Mycobacterium marinum (strain ATCC BAA-535 / M)</name>
    <dbReference type="NCBI Taxonomy" id="216594"/>
    <lineage>
        <taxon>Bacteria</taxon>
        <taxon>Bacillati</taxon>
        <taxon>Actinomycetota</taxon>
        <taxon>Actinomycetes</taxon>
        <taxon>Mycobacteriales</taxon>
        <taxon>Mycobacteriaceae</taxon>
        <taxon>Mycobacterium</taxon>
        <taxon>Mycobacterium ulcerans group</taxon>
    </lineage>
</organism>
<name>DCDB_MYCMM</name>
<comment type="function">
    <text evidence="1">Bifunctional enzyme that catalyzes both the deamination of dCTP to dUTP and the hydrolysis of dUTP to dUMP without releasing the toxic dUTP intermediate.</text>
</comment>
<comment type="catalytic activity">
    <reaction evidence="1">
        <text>dCTP + 2 H2O = dUMP + NH4(+) + diphosphate</text>
        <dbReference type="Rhea" id="RHEA:19205"/>
        <dbReference type="ChEBI" id="CHEBI:15377"/>
        <dbReference type="ChEBI" id="CHEBI:28938"/>
        <dbReference type="ChEBI" id="CHEBI:33019"/>
        <dbReference type="ChEBI" id="CHEBI:61481"/>
        <dbReference type="ChEBI" id="CHEBI:246422"/>
        <dbReference type="EC" id="3.5.4.30"/>
    </reaction>
</comment>
<comment type="pathway">
    <text evidence="1">Pyrimidine metabolism; dUMP biosynthesis; dUMP from dCTP: step 1/1.</text>
</comment>
<comment type="subunit">
    <text evidence="1">Homotrimer.</text>
</comment>
<comment type="similarity">
    <text evidence="1">Belongs to the dCTP deaminase family.</text>
</comment>
<reference key="1">
    <citation type="journal article" date="2008" name="Genome Res.">
        <title>Insights from the complete genome sequence of Mycobacterium marinum on the evolution of Mycobacterium tuberculosis.</title>
        <authorList>
            <person name="Stinear T.P."/>
            <person name="Seemann T."/>
            <person name="Harrison P.F."/>
            <person name="Jenkin G.A."/>
            <person name="Davies J.K."/>
            <person name="Johnson P.D."/>
            <person name="Abdellah Z."/>
            <person name="Arrowsmith C."/>
            <person name="Chillingworth T."/>
            <person name="Churcher C."/>
            <person name="Clarke K."/>
            <person name="Cronin A."/>
            <person name="Davis P."/>
            <person name="Goodhead I."/>
            <person name="Holroyd N."/>
            <person name="Jagels K."/>
            <person name="Lord A."/>
            <person name="Moule S."/>
            <person name="Mungall K."/>
            <person name="Norbertczak H."/>
            <person name="Quail M.A."/>
            <person name="Rabbinowitsch E."/>
            <person name="Walker D."/>
            <person name="White B."/>
            <person name="Whitehead S."/>
            <person name="Small P.L."/>
            <person name="Brosch R."/>
            <person name="Ramakrishnan L."/>
            <person name="Fischbach M.A."/>
            <person name="Parkhill J."/>
            <person name="Cole S.T."/>
        </authorList>
    </citation>
    <scope>NUCLEOTIDE SEQUENCE [LARGE SCALE GENOMIC DNA]</scope>
    <source>
        <strain>ATCC BAA-535 / M</strain>
    </source>
</reference>
<protein>
    <recommendedName>
        <fullName evidence="1">dCTP deaminase, dUMP-forming</fullName>
        <ecNumber evidence="1">3.5.4.30</ecNumber>
    </recommendedName>
    <alternativeName>
        <fullName evidence="1">Bifunctional dCTP deaminase:dUTPase</fullName>
    </alternativeName>
    <alternativeName>
        <fullName evidence="1">DCD-DUT</fullName>
    </alternativeName>
</protein>
<keyword id="KW-0378">Hydrolase</keyword>
<keyword id="KW-0546">Nucleotide metabolism</keyword>
<keyword id="KW-0547">Nucleotide-binding</keyword>
<keyword id="KW-1185">Reference proteome</keyword>
<sequence length="190" mass="20671">MLLSDRDLRAEISAGRLGIDPFDDSLVQPSSVDVRLDCMFRVFNNTRYTHIDPAQRQDELTSVVEPTKGDPFVLHPGEFVLGSTLEIFSLPGDLAGRLEGKSSLGRLGLLTHSTAGFIDPGFSGHITLELSNVANLPITLWPGMKIGQLCILKLTSPSEHPYGSSGVGSKYQGQRGPTPSRSYQNFIRST</sequence>
<feature type="chain" id="PRO_1000096439" description="dCTP deaminase, dUMP-forming">
    <location>
        <begin position="1"/>
        <end position="190"/>
    </location>
</feature>
<feature type="region of interest" description="Disordered" evidence="2">
    <location>
        <begin position="161"/>
        <end position="190"/>
    </location>
</feature>
<feature type="compositionally biased region" description="Polar residues" evidence="2">
    <location>
        <begin position="171"/>
        <end position="190"/>
    </location>
</feature>
<feature type="active site" description="Proton donor/acceptor" evidence="1">
    <location>
        <position position="129"/>
    </location>
</feature>
<feature type="binding site" evidence="1">
    <location>
        <begin position="101"/>
        <end position="106"/>
    </location>
    <ligand>
        <name>dCTP</name>
        <dbReference type="ChEBI" id="CHEBI:61481"/>
    </ligand>
</feature>
<feature type="binding site" evidence="1">
    <location>
        <position position="119"/>
    </location>
    <ligand>
        <name>dCTP</name>
        <dbReference type="ChEBI" id="CHEBI:61481"/>
    </ligand>
</feature>
<feature type="binding site" evidence="1">
    <location>
        <begin position="127"/>
        <end position="129"/>
    </location>
    <ligand>
        <name>dCTP</name>
        <dbReference type="ChEBI" id="CHEBI:61481"/>
    </ligand>
</feature>
<feature type="binding site" evidence="1">
    <location>
        <position position="148"/>
    </location>
    <ligand>
        <name>dCTP</name>
        <dbReference type="ChEBI" id="CHEBI:61481"/>
    </ligand>
</feature>
<feature type="binding site" evidence="1">
    <location>
        <position position="162"/>
    </location>
    <ligand>
        <name>dCTP</name>
        <dbReference type="ChEBI" id="CHEBI:61481"/>
    </ligand>
</feature>
<feature type="binding site" evidence="1">
    <location>
        <position position="174"/>
    </location>
    <ligand>
        <name>dCTP</name>
        <dbReference type="ChEBI" id="CHEBI:61481"/>
    </ligand>
</feature>
<feature type="site" description="Important for bifunctional activity" evidence="1">
    <location>
        <begin position="116"/>
        <end position="117"/>
    </location>
</feature>
<gene>
    <name evidence="1" type="primary">dcd</name>
    <name type="ordered locus">MMAR_0600</name>
</gene>
<accession>B2HP20</accession>
<dbReference type="EC" id="3.5.4.30" evidence="1"/>
<dbReference type="EMBL" id="CP000854">
    <property type="protein sequence ID" value="ACC39062.1"/>
    <property type="molecule type" value="Genomic_DNA"/>
</dbReference>
<dbReference type="RefSeq" id="WP_012392561.1">
    <property type="nucleotide sequence ID" value="NC_010612.1"/>
</dbReference>
<dbReference type="SMR" id="B2HP20"/>
<dbReference type="STRING" id="216594.MMAR_0600"/>
<dbReference type="GeneID" id="34342894"/>
<dbReference type="GeneID" id="93439021"/>
<dbReference type="KEGG" id="mmi:MMAR_0600"/>
<dbReference type="eggNOG" id="COG0717">
    <property type="taxonomic scope" value="Bacteria"/>
</dbReference>
<dbReference type="HOGENOM" id="CLU_087476_2_1_11"/>
<dbReference type="OrthoDB" id="9780956at2"/>
<dbReference type="UniPathway" id="UPA00610">
    <property type="reaction ID" value="UER00667"/>
</dbReference>
<dbReference type="Proteomes" id="UP000001190">
    <property type="component" value="Chromosome"/>
</dbReference>
<dbReference type="GO" id="GO:0033973">
    <property type="term" value="F:dCTP deaminase (dUMP-forming) activity"/>
    <property type="evidence" value="ECO:0007669"/>
    <property type="project" value="UniProtKB-UniRule"/>
</dbReference>
<dbReference type="GO" id="GO:0008829">
    <property type="term" value="F:dCTP deaminase activity"/>
    <property type="evidence" value="ECO:0007669"/>
    <property type="project" value="InterPro"/>
</dbReference>
<dbReference type="GO" id="GO:0000166">
    <property type="term" value="F:nucleotide binding"/>
    <property type="evidence" value="ECO:0007669"/>
    <property type="project" value="UniProtKB-KW"/>
</dbReference>
<dbReference type="GO" id="GO:0006226">
    <property type="term" value="P:dUMP biosynthetic process"/>
    <property type="evidence" value="ECO:0007669"/>
    <property type="project" value="UniProtKB-UniRule"/>
</dbReference>
<dbReference type="GO" id="GO:0006229">
    <property type="term" value="P:dUTP biosynthetic process"/>
    <property type="evidence" value="ECO:0007669"/>
    <property type="project" value="InterPro"/>
</dbReference>
<dbReference type="GO" id="GO:0015949">
    <property type="term" value="P:nucleobase-containing small molecule interconversion"/>
    <property type="evidence" value="ECO:0007669"/>
    <property type="project" value="TreeGrafter"/>
</dbReference>
<dbReference type="CDD" id="cd07557">
    <property type="entry name" value="trimeric_dUTPase"/>
    <property type="match status" value="1"/>
</dbReference>
<dbReference type="FunFam" id="2.70.40.10:FF:000005">
    <property type="entry name" value="dCTP deaminase, dUMP-forming"/>
    <property type="match status" value="1"/>
</dbReference>
<dbReference type="Gene3D" id="2.70.40.10">
    <property type="match status" value="1"/>
</dbReference>
<dbReference type="HAMAP" id="MF_00146">
    <property type="entry name" value="dCTP_deaminase"/>
    <property type="match status" value="1"/>
</dbReference>
<dbReference type="InterPro" id="IPR011962">
    <property type="entry name" value="dCTP_deaminase"/>
</dbReference>
<dbReference type="InterPro" id="IPR036157">
    <property type="entry name" value="dUTPase-like_sf"/>
</dbReference>
<dbReference type="InterPro" id="IPR033704">
    <property type="entry name" value="dUTPase_trimeric"/>
</dbReference>
<dbReference type="NCBIfam" id="TIGR02274">
    <property type="entry name" value="dCTP_deam"/>
    <property type="match status" value="1"/>
</dbReference>
<dbReference type="PANTHER" id="PTHR42680">
    <property type="entry name" value="DCTP DEAMINASE"/>
    <property type="match status" value="1"/>
</dbReference>
<dbReference type="PANTHER" id="PTHR42680:SF3">
    <property type="entry name" value="DCTP DEAMINASE"/>
    <property type="match status" value="1"/>
</dbReference>
<dbReference type="Pfam" id="PF22769">
    <property type="entry name" value="DCD"/>
    <property type="match status" value="1"/>
</dbReference>
<dbReference type="SUPFAM" id="SSF51283">
    <property type="entry name" value="dUTPase-like"/>
    <property type="match status" value="1"/>
</dbReference>
<proteinExistence type="inferred from homology"/>
<evidence type="ECO:0000255" key="1">
    <source>
        <dbReference type="HAMAP-Rule" id="MF_00146"/>
    </source>
</evidence>
<evidence type="ECO:0000256" key="2">
    <source>
        <dbReference type="SAM" id="MobiDB-lite"/>
    </source>
</evidence>